<organism>
    <name type="scientific">Aspergillus fumigatus (strain ATCC MYA-4609 / CBS 101355 / FGSC A1100 / Af293)</name>
    <name type="common">Neosartorya fumigata</name>
    <dbReference type="NCBI Taxonomy" id="330879"/>
    <lineage>
        <taxon>Eukaryota</taxon>
        <taxon>Fungi</taxon>
        <taxon>Dikarya</taxon>
        <taxon>Ascomycota</taxon>
        <taxon>Pezizomycotina</taxon>
        <taxon>Eurotiomycetes</taxon>
        <taxon>Eurotiomycetidae</taxon>
        <taxon>Eurotiales</taxon>
        <taxon>Aspergillaceae</taxon>
        <taxon>Aspergillus</taxon>
        <taxon>Aspergillus subgen. Fumigati</taxon>
    </lineage>
</organism>
<protein>
    <recommendedName>
        <fullName evidence="3">Large ribosomal subunit protein uL3</fullName>
    </recommendedName>
    <alternativeName>
        <fullName>60S ribosomal protein L3</fullName>
    </alternativeName>
    <allergenName>Asp f 23</allergenName>
</protein>
<proteinExistence type="evidence at protein level"/>
<evidence type="ECO:0000255" key="1"/>
<evidence type="ECO:0000269" key="2">
    <source>
    </source>
</evidence>
<evidence type="ECO:0000305" key="3"/>
<evidence type="ECO:0000312" key="4">
    <source>
        <dbReference type="EMBL" id="AAM43909.1"/>
    </source>
</evidence>
<accession>Q8NKF4</accession>
<accession>Q4X0Y6</accession>
<dbReference type="EMBL" id="AF464911">
    <property type="protein sequence ID" value="AAM43909.1"/>
    <property type="molecule type" value="mRNA"/>
</dbReference>
<dbReference type="EMBL" id="AAHF01000001">
    <property type="protein sequence ID" value="EAL93479.1"/>
    <property type="molecule type" value="Genomic_DNA"/>
</dbReference>
<dbReference type="RefSeq" id="XP_755517.1">
    <property type="nucleotide sequence ID" value="XM_750424.1"/>
</dbReference>
<dbReference type="SMR" id="Q8NKF4"/>
<dbReference type="FunCoup" id="Q8NKF4">
    <property type="interactions" value="762"/>
</dbReference>
<dbReference type="STRING" id="330879.Q8NKF4"/>
<dbReference type="Allergome" id="1183">
    <property type="allergen name" value="Asp f 23"/>
</dbReference>
<dbReference type="Allergome" id="3117">
    <property type="allergen name" value="Asp f 23.0101"/>
</dbReference>
<dbReference type="EnsemblFungi" id="EAL93479">
    <property type="protein sequence ID" value="EAL93479"/>
    <property type="gene ID" value="AFUA_2G11850"/>
</dbReference>
<dbReference type="GeneID" id="3513239"/>
<dbReference type="KEGG" id="afm:AFUA_2G11850"/>
<dbReference type="VEuPathDB" id="FungiDB:Afu2g11850"/>
<dbReference type="eggNOG" id="KOG0746">
    <property type="taxonomic scope" value="Eukaryota"/>
</dbReference>
<dbReference type="HOGENOM" id="CLU_033361_2_1_1"/>
<dbReference type="InParanoid" id="Q8NKF4"/>
<dbReference type="OMA" id="QRTEYNK"/>
<dbReference type="OrthoDB" id="1611972at2759"/>
<dbReference type="Proteomes" id="UP000002530">
    <property type="component" value="Chromosome 2"/>
</dbReference>
<dbReference type="GO" id="GO:0022625">
    <property type="term" value="C:cytosolic large ribosomal subunit"/>
    <property type="evidence" value="ECO:0000318"/>
    <property type="project" value="GO_Central"/>
</dbReference>
<dbReference type="GO" id="GO:0003723">
    <property type="term" value="F:RNA binding"/>
    <property type="evidence" value="ECO:0000318"/>
    <property type="project" value="GO_Central"/>
</dbReference>
<dbReference type="GO" id="GO:0003735">
    <property type="term" value="F:structural constituent of ribosome"/>
    <property type="evidence" value="ECO:0000318"/>
    <property type="project" value="GO_Central"/>
</dbReference>
<dbReference type="GO" id="GO:0006412">
    <property type="term" value="P:translation"/>
    <property type="evidence" value="ECO:0000318"/>
    <property type="project" value="GO_Central"/>
</dbReference>
<dbReference type="FunFam" id="2.40.30.10:FF:000079">
    <property type="entry name" value="60S ribosomal protein L3"/>
    <property type="match status" value="1"/>
</dbReference>
<dbReference type="FunFam" id="3.30.1430.10:FF:000001">
    <property type="entry name" value="60S ribosomal protein L3"/>
    <property type="match status" value="1"/>
</dbReference>
<dbReference type="FunFam" id="4.10.960.10:FF:000001">
    <property type="entry name" value="60S ribosomal protein L3"/>
    <property type="match status" value="1"/>
</dbReference>
<dbReference type="FunFam" id="4.10.960.10:FF:000002">
    <property type="entry name" value="60S ribosomal protein L3"/>
    <property type="match status" value="1"/>
</dbReference>
<dbReference type="FunFam" id="2.40.30.10:FF:000351">
    <property type="entry name" value="Ribosomal protein L3"/>
    <property type="match status" value="1"/>
</dbReference>
<dbReference type="Gene3D" id="3.30.1430.10">
    <property type="match status" value="1"/>
</dbReference>
<dbReference type="Gene3D" id="4.10.960.10">
    <property type="entry name" value="Ribosomal protein L3, domain 3"/>
    <property type="match status" value="1"/>
</dbReference>
<dbReference type="Gene3D" id="2.40.30.10">
    <property type="entry name" value="Translation factors"/>
    <property type="match status" value="1"/>
</dbReference>
<dbReference type="InterPro" id="IPR045077">
    <property type="entry name" value="L3_arc_euk"/>
</dbReference>
<dbReference type="InterPro" id="IPR044892">
    <property type="entry name" value="Ribosomal_L3_dom_3_arc_sf"/>
</dbReference>
<dbReference type="InterPro" id="IPR000597">
    <property type="entry name" value="Ribosomal_uL3"/>
</dbReference>
<dbReference type="InterPro" id="IPR019926">
    <property type="entry name" value="Ribosomal_uL3_CS"/>
</dbReference>
<dbReference type="InterPro" id="IPR009000">
    <property type="entry name" value="Transl_B-barrel_sf"/>
</dbReference>
<dbReference type="PANTHER" id="PTHR11363">
    <property type="entry name" value="60S RIBOSOMAL PROTEIN L3-RELATED"/>
    <property type="match status" value="1"/>
</dbReference>
<dbReference type="PANTHER" id="PTHR11363:SF5">
    <property type="entry name" value="LARGE RIBOSOMAL SUBUNIT PROTEIN UL3"/>
    <property type="match status" value="1"/>
</dbReference>
<dbReference type="Pfam" id="PF00297">
    <property type="entry name" value="Ribosomal_L3"/>
    <property type="match status" value="1"/>
</dbReference>
<dbReference type="SUPFAM" id="SSF50447">
    <property type="entry name" value="Translation proteins"/>
    <property type="match status" value="1"/>
</dbReference>
<dbReference type="PROSITE" id="PS00474">
    <property type="entry name" value="RIBOSOMAL_L3"/>
    <property type="match status" value="1"/>
</dbReference>
<gene>
    <name type="primary">rpl3</name>
    <name type="ORF">AFUA_2G11850</name>
</gene>
<keyword id="KW-0020">Allergen</keyword>
<keyword id="KW-0963">Cytoplasm</keyword>
<keyword id="KW-1185">Reference proteome</keyword>
<keyword id="KW-0687">Ribonucleoprotein</keyword>
<keyword id="KW-0689">Ribosomal protein</keyword>
<name>RL3_ASPFU</name>
<feature type="chain" id="PRO_0000077244" description="Large ribosomal subunit protein uL3">
    <location>
        <begin position="1"/>
        <end position="392"/>
    </location>
</feature>
<feature type="sequence conflict" description="In Ref. 1; AAM43909." evidence="3" ref="1">
    <original>D</original>
    <variation>Y</variation>
    <location>
        <position position="35"/>
    </location>
</feature>
<reference evidence="3 4" key="1">
    <citation type="journal article" date="2003" name="Clin. Exp. Immunol.">
        <title>cDNA cloning, expression and characterization of an allergenic L3 ribosomal protein of Aspergillus fumigatus.</title>
        <authorList>
            <person name="Saxena S."/>
            <person name="Madan T."/>
            <person name="Muralidhar K."/>
            <person name="Sarma P.U."/>
        </authorList>
    </citation>
    <scope>NUCLEOTIDE SEQUENCE [MRNA]</scope>
    <scope>ALLERGEN</scope>
</reference>
<reference key="2">
    <citation type="journal article" date="2005" name="Nature">
        <title>Genomic sequence of the pathogenic and allergenic filamentous fungus Aspergillus fumigatus.</title>
        <authorList>
            <person name="Nierman W.C."/>
            <person name="Pain A."/>
            <person name="Anderson M.J."/>
            <person name="Wortman J.R."/>
            <person name="Kim H.S."/>
            <person name="Arroyo J."/>
            <person name="Berriman M."/>
            <person name="Abe K."/>
            <person name="Archer D.B."/>
            <person name="Bermejo C."/>
            <person name="Bennett J.W."/>
            <person name="Bowyer P."/>
            <person name="Chen D."/>
            <person name="Collins M."/>
            <person name="Coulsen R."/>
            <person name="Davies R."/>
            <person name="Dyer P.S."/>
            <person name="Farman M.L."/>
            <person name="Fedorova N."/>
            <person name="Fedorova N.D."/>
            <person name="Feldblyum T.V."/>
            <person name="Fischer R."/>
            <person name="Fosker N."/>
            <person name="Fraser A."/>
            <person name="Garcia J.L."/>
            <person name="Garcia M.J."/>
            <person name="Goble A."/>
            <person name="Goldman G.H."/>
            <person name="Gomi K."/>
            <person name="Griffith-Jones S."/>
            <person name="Gwilliam R."/>
            <person name="Haas B.J."/>
            <person name="Haas H."/>
            <person name="Harris D.E."/>
            <person name="Horiuchi H."/>
            <person name="Huang J."/>
            <person name="Humphray S."/>
            <person name="Jimenez J."/>
            <person name="Keller N."/>
            <person name="Khouri H."/>
            <person name="Kitamoto K."/>
            <person name="Kobayashi T."/>
            <person name="Konzack S."/>
            <person name="Kulkarni R."/>
            <person name="Kumagai T."/>
            <person name="Lafton A."/>
            <person name="Latge J.-P."/>
            <person name="Li W."/>
            <person name="Lord A."/>
            <person name="Lu C."/>
            <person name="Majoros W.H."/>
            <person name="May G.S."/>
            <person name="Miller B.L."/>
            <person name="Mohamoud Y."/>
            <person name="Molina M."/>
            <person name="Monod M."/>
            <person name="Mouyna I."/>
            <person name="Mulligan S."/>
            <person name="Murphy L.D."/>
            <person name="O'Neil S."/>
            <person name="Paulsen I."/>
            <person name="Penalva M.A."/>
            <person name="Pertea M."/>
            <person name="Price C."/>
            <person name="Pritchard B.L."/>
            <person name="Quail M.A."/>
            <person name="Rabbinowitsch E."/>
            <person name="Rawlins N."/>
            <person name="Rajandream M.A."/>
            <person name="Reichard U."/>
            <person name="Renauld H."/>
            <person name="Robson G.D."/>
            <person name="Rodriguez de Cordoba S."/>
            <person name="Rodriguez-Pena J.M."/>
            <person name="Ronning C.M."/>
            <person name="Rutter S."/>
            <person name="Salzberg S.L."/>
            <person name="Sanchez M."/>
            <person name="Sanchez-Ferrero J.C."/>
            <person name="Saunders D."/>
            <person name="Seeger K."/>
            <person name="Squares R."/>
            <person name="Squares S."/>
            <person name="Takeuchi M."/>
            <person name="Tekaia F."/>
            <person name="Turner G."/>
            <person name="Vazquez de Aldana C.R."/>
            <person name="Weidman J."/>
            <person name="White O."/>
            <person name="Woodward J.R."/>
            <person name="Yu J.-H."/>
            <person name="Fraser C.M."/>
            <person name="Galagan J.E."/>
            <person name="Asai K."/>
            <person name="Machida M."/>
            <person name="Hall N."/>
            <person name="Barrell B.G."/>
            <person name="Denning D.W."/>
        </authorList>
    </citation>
    <scope>NUCLEOTIDE SEQUENCE [LARGE SCALE GENOMIC DNA]</scope>
    <source>
        <strain>ATCC MYA-4609 / CBS 101355 / FGSC A1100 / Af293</strain>
    </source>
</reference>
<comment type="function">
    <text evidence="3">The L3 protein is a component of the large subunit of cytoplasmic ribosomes.</text>
</comment>
<comment type="subcellular location">
    <subcellularLocation>
        <location>Cytoplasm</location>
    </subcellularLocation>
</comment>
<comment type="allergen">
    <text evidence="2">Causes an allergic reaction in human. Binds to IgE and IgG.</text>
</comment>
<comment type="similarity">
    <text evidence="1">Belongs to the universal ribosomal protein uL3 family.</text>
</comment>
<sequence length="392" mass="44445">MSHRKYEAPRHGSLAFLPRKRAARHRGKVKSFPKDDPKKPVHLTASMGYKAGMTTVVRDLDRPGAKMHKKEIVEAVTIIETPPLVAVGVVGYIETPRGLRSLTTVWAEHLSDEVKRRFYKNWYKSKKKAFTKYAKKHAEENGASITRELERIKKYCTVVRVLAHTQIRKTPLKQKKAHLMEIQVNGGSVADKVDFARNLFEKPIEIDSIFEKDEMIDVIAVTKGHGFQGVTSRWGTKKLPRKTHKGLRKVACIGAWHPSHVQWTVARAGQMGYHHRTSCNHKVFRIGKGSDEGNASTDFDISKKQITPMGGFVRYGEVKNDYIMVKGSVPGVKKRVMTLRKTLYPQTSRRATEKVELKWIDTSSKFGHGAFQTPEEKRAFMGTLKKDLVTSA</sequence>